<keyword id="KW-0150">Chloroplast</keyword>
<keyword id="KW-0249">Electron transport</keyword>
<keyword id="KW-0349">Heme</keyword>
<keyword id="KW-0408">Iron</keyword>
<keyword id="KW-0472">Membrane</keyword>
<keyword id="KW-0479">Metal-binding</keyword>
<keyword id="KW-0602">Photosynthesis</keyword>
<keyword id="KW-0934">Plastid</keyword>
<keyword id="KW-0732">Signal</keyword>
<keyword id="KW-0793">Thylakoid</keyword>
<keyword id="KW-0812">Transmembrane</keyword>
<keyword id="KW-1133">Transmembrane helix</keyword>
<keyword id="KW-0813">Transport</keyword>
<gene>
    <name evidence="2" type="primary">petA</name>
</gene>
<dbReference type="EMBL" id="AY916449">
    <property type="protein sequence ID" value="AAW82513.1"/>
    <property type="molecule type" value="Genomic_DNA"/>
</dbReference>
<dbReference type="RefSeq" id="YP_358590.1">
    <property type="nucleotide sequence ID" value="NC_007499.1"/>
</dbReference>
<dbReference type="SMR" id="Q3BAM8"/>
<dbReference type="GeneID" id="3741692"/>
<dbReference type="GO" id="GO:0009535">
    <property type="term" value="C:chloroplast thylakoid membrane"/>
    <property type="evidence" value="ECO:0007669"/>
    <property type="project" value="UniProtKB-SubCell"/>
</dbReference>
<dbReference type="GO" id="GO:0009055">
    <property type="term" value="F:electron transfer activity"/>
    <property type="evidence" value="ECO:0007669"/>
    <property type="project" value="UniProtKB-UniRule"/>
</dbReference>
<dbReference type="GO" id="GO:0020037">
    <property type="term" value="F:heme binding"/>
    <property type="evidence" value="ECO:0007669"/>
    <property type="project" value="InterPro"/>
</dbReference>
<dbReference type="GO" id="GO:0005506">
    <property type="term" value="F:iron ion binding"/>
    <property type="evidence" value="ECO:0007669"/>
    <property type="project" value="InterPro"/>
</dbReference>
<dbReference type="GO" id="GO:0015979">
    <property type="term" value="P:photosynthesis"/>
    <property type="evidence" value="ECO:0007669"/>
    <property type="project" value="UniProtKB-UniRule"/>
</dbReference>
<dbReference type="FunFam" id="1.20.5.700:FF:000001">
    <property type="entry name" value="Cytochrome f"/>
    <property type="match status" value="1"/>
</dbReference>
<dbReference type="FunFam" id="2.40.50.100:FF:000007">
    <property type="entry name" value="Cytochrome f"/>
    <property type="match status" value="1"/>
</dbReference>
<dbReference type="FunFam" id="2.60.40.830:FF:000001">
    <property type="entry name" value="Cytochrome f"/>
    <property type="match status" value="1"/>
</dbReference>
<dbReference type="Gene3D" id="2.40.50.100">
    <property type="match status" value="1"/>
</dbReference>
<dbReference type="Gene3D" id="2.60.40.830">
    <property type="entry name" value="Cytochrome f large domain"/>
    <property type="match status" value="1"/>
</dbReference>
<dbReference type="Gene3D" id="1.20.5.700">
    <property type="entry name" value="Single helix bin"/>
    <property type="match status" value="1"/>
</dbReference>
<dbReference type="HAMAP" id="MF_00610">
    <property type="entry name" value="Cytb6_f_cytF"/>
    <property type="match status" value="1"/>
</dbReference>
<dbReference type="InterPro" id="IPR024058">
    <property type="entry name" value="Cyt-f_TM"/>
</dbReference>
<dbReference type="InterPro" id="IPR002325">
    <property type="entry name" value="Cyt_f"/>
</dbReference>
<dbReference type="InterPro" id="IPR024094">
    <property type="entry name" value="Cyt_f_lg_dom"/>
</dbReference>
<dbReference type="InterPro" id="IPR036826">
    <property type="entry name" value="Cyt_f_lg_dom_sf"/>
</dbReference>
<dbReference type="InterPro" id="IPR011054">
    <property type="entry name" value="Rudment_hybrid_motif"/>
</dbReference>
<dbReference type="PANTHER" id="PTHR33288">
    <property type="match status" value="1"/>
</dbReference>
<dbReference type="PANTHER" id="PTHR33288:SF10">
    <property type="entry name" value="CYTOCHROME F"/>
    <property type="match status" value="1"/>
</dbReference>
<dbReference type="Pfam" id="PF01333">
    <property type="entry name" value="Apocytochr_F_C"/>
    <property type="match status" value="1"/>
</dbReference>
<dbReference type="Pfam" id="PF16639">
    <property type="entry name" value="Apocytochr_F_N"/>
    <property type="match status" value="1"/>
</dbReference>
<dbReference type="PRINTS" id="PR00610">
    <property type="entry name" value="CYTOCHROMEF"/>
</dbReference>
<dbReference type="SUPFAM" id="SSF103431">
    <property type="entry name" value="Cytochrome f subunit of the cytochrome b6f complex, transmembrane anchor"/>
    <property type="match status" value="1"/>
</dbReference>
<dbReference type="SUPFAM" id="SSF49441">
    <property type="entry name" value="Cytochrome f, large domain"/>
    <property type="match status" value="1"/>
</dbReference>
<dbReference type="SUPFAM" id="SSF51246">
    <property type="entry name" value="Rudiment single hybrid motif"/>
    <property type="match status" value="1"/>
</dbReference>
<dbReference type="PROSITE" id="PS51010">
    <property type="entry name" value="CYTF"/>
    <property type="match status" value="1"/>
</dbReference>
<geneLocation type="chloroplast"/>
<feature type="signal peptide" evidence="2">
    <location>
        <begin position="1"/>
        <end position="35"/>
    </location>
</feature>
<feature type="chain" id="PRO_0000275439" description="Cytochrome f">
    <location>
        <begin position="36"/>
        <end position="320"/>
    </location>
</feature>
<feature type="transmembrane region" description="Helical" evidence="2">
    <location>
        <begin position="286"/>
        <end position="306"/>
    </location>
</feature>
<feature type="binding site" description="axial binding residue" evidence="2">
    <location>
        <position position="36"/>
    </location>
    <ligand>
        <name>heme</name>
        <dbReference type="ChEBI" id="CHEBI:30413"/>
    </ligand>
    <ligandPart>
        <name>Fe</name>
        <dbReference type="ChEBI" id="CHEBI:18248"/>
    </ligandPart>
</feature>
<feature type="binding site" description="covalent" evidence="2">
    <location>
        <position position="56"/>
    </location>
    <ligand>
        <name>heme</name>
        <dbReference type="ChEBI" id="CHEBI:30413"/>
    </ligand>
</feature>
<feature type="binding site" description="covalent" evidence="2">
    <location>
        <position position="59"/>
    </location>
    <ligand>
        <name>heme</name>
        <dbReference type="ChEBI" id="CHEBI:30413"/>
    </ligand>
</feature>
<feature type="binding site" description="axial binding residue" evidence="2">
    <location>
        <position position="60"/>
    </location>
    <ligand>
        <name>heme</name>
        <dbReference type="ChEBI" id="CHEBI:30413"/>
    </ligand>
    <ligandPart>
        <name>Fe</name>
        <dbReference type="ChEBI" id="CHEBI:18248"/>
    </ligandPart>
</feature>
<sequence>MQNRKTFSWVKEQMTRSIYVSIMIYVITRASISNAYPIFAQQVYENPREATGRIVCANCHLANKPVDIEVPQAVLPDTVFEAVVRIPYDMQLKQVLANGKKGALNVGAVIILPEGFELAPPDRISPEIKEKMGNLSFQFYRPNKRNILVIGPVPGQKYSEIVFPILSPDPATKKDVHFLKYPIYVGGNRGRGQIYPDGNKSNNTVYNATSAGIVSRIARKEKGGYEITIVDASEGRQVVDIIPPGPELLVSEGESIKLDQPLTSNPNVGGFGQGDTEIVLQDPLRVQGLLFFLASVILAQIFLVLKKKQFEKVQLYEMNF</sequence>
<comment type="function">
    <text evidence="2">Component of the cytochrome b6-f complex, which mediates electron transfer between photosystem II (PSII) and photosystem I (PSI), cyclic electron flow around PSI, and state transitions.</text>
</comment>
<comment type="cofactor">
    <cofactor evidence="2">
        <name>heme</name>
        <dbReference type="ChEBI" id="CHEBI:30413"/>
    </cofactor>
    <text evidence="2">Binds 1 heme group covalently.</text>
</comment>
<comment type="subunit">
    <text evidence="1">The 4 large subunits of the cytochrome b6-f complex are cytochrome b6, subunit IV (17 kDa polypeptide, petD), cytochrome f and the Rieske protein, while the 4 small subunits are PetG, PetL, PetM and PetN. The complex functions as a dimer (By similarity).</text>
</comment>
<comment type="subcellular location">
    <subcellularLocation>
        <location evidence="2">Plastid</location>
        <location evidence="2">Chloroplast thylakoid membrane</location>
        <topology evidence="2">Single-pass membrane protein</topology>
    </subcellularLocation>
</comment>
<comment type="similarity">
    <text evidence="2">Belongs to the cytochrome f family.</text>
</comment>
<proteinExistence type="inferred from homology"/>
<organism>
    <name type="scientific">Phalaenopsis aphrodite subsp. formosana</name>
    <name type="common">Moth orchid</name>
    <dbReference type="NCBI Taxonomy" id="308872"/>
    <lineage>
        <taxon>Eukaryota</taxon>
        <taxon>Viridiplantae</taxon>
        <taxon>Streptophyta</taxon>
        <taxon>Embryophyta</taxon>
        <taxon>Tracheophyta</taxon>
        <taxon>Spermatophyta</taxon>
        <taxon>Magnoliopsida</taxon>
        <taxon>Liliopsida</taxon>
        <taxon>Asparagales</taxon>
        <taxon>Orchidaceae</taxon>
        <taxon>Epidendroideae</taxon>
        <taxon>Vandeae</taxon>
        <taxon>Aeridinae</taxon>
        <taxon>Phalaenopsis</taxon>
    </lineage>
</organism>
<evidence type="ECO:0000250" key="1"/>
<evidence type="ECO:0000255" key="2">
    <source>
        <dbReference type="HAMAP-Rule" id="MF_00610"/>
    </source>
</evidence>
<name>CYF_PHAAO</name>
<protein>
    <recommendedName>
        <fullName evidence="2">Cytochrome f</fullName>
    </recommendedName>
</protein>
<accession>Q3BAM8</accession>
<reference key="1">
    <citation type="journal article" date="2006" name="Mol. Biol. Evol.">
        <title>The chloroplast genome of Phalaenopsis aphrodite (Orchidaceae): comparative analysis of evolutionary rate with that of grasses and its phylogenetic implications.</title>
        <authorList>
            <person name="Chang C.-C."/>
            <person name="Lin H.-C."/>
            <person name="Lin I.-P."/>
            <person name="Chow T.-Y."/>
            <person name="Chen H.-H."/>
            <person name="Chen W.-H."/>
            <person name="Cheng C.-H."/>
            <person name="Lin C.-Y."/>
            <person name="Liu S.-M."/>
            <person name="Chang C.-C."/>
            <person name="Chaw S.-M."/>
        </authorList>
    </citation>
    <scope>NUCLEOTIDE SEQUENCE [LARGE SCALE GENOMIC DNA]</scope>
    <source>
        <strain>cv. Taisugar TS-97</strain>
    </source>
</reference>